<sequence>MVQSPMLSCPLKQTNEIDWIRPLKDYIRQSYGEDPERYNQECATLNRLRQDMRGAGKDSATGRDLLYRYYGQLELLDLRFPVDENHIKISFTWYDAFTHKPTSQYSLAYEKASIIFNISAVLSCHAANQNRAEESGLKTAYHSFQASAGMFTYINENFLHAPSTDLNRETVKTLINITLAQAQEVFLEKQVTDQKKAGFLAKLASQAAYLYSQAAEGIQEYAKGVFDKSWTIVVQAKAAHMASVASYYQALADSESNSHGVAIARLQLADKNSTAAMGWANLVDTIKYHQANVQVKLATFVKDNDFIYHQPVPNEAGLSAVAKLPAAKAIPVSELYQGQDIQRIIGPDIFQKLVPMSVTETASLYDEEKAKLIRAETEKVETADSEMAASLDYLKLPGSLNILKGGMDQEMTVDDEFRQWCQELAGHQSFAKAFDTLQDRKGEILSQLDRCSKQLDLEESVCEKMRSKYGADWSQQPSARLNSTLRSDIRTYRDTINEASASDSQLLATFRQYETDFDEMRSAGETNEADVLFQRAMIKAGSKHGKGRNGVGSPYASTQEGSLLDDVYDEGSLSVAEQIARVESILKKLNLVKRERSQVLKDLKEKVHNDDISNVLILNKKSIAGQESQLFETELEKFRPHQNRLLQANHKQAALMKELTKVYGDLLQDKRVRSEQSKYEAITRQRNTVMARYKKIYDAFNGLLSGIAQAQTFYTEMVETVESLKKNVETFINNRRSEGAQLLGQIEREKAGTATDQEDREREKLRQLMERLSTEPKPTSTPLPSTAPSKAKSPPPPVKAPGYPGPGIASPQMSPHFAPGVAGQQHGIPLSHSPAPYGQYVAPPSGVSYMQGQPFQQGAAAPLSEGYNPMAYPAPTSISPPPSQQYYSSTPAPYSGYSNPAPPNAPSQFMPQGYVPPPPPPRPQQPSYPPSTGPYPSGPGGYAQSRPYGTSQHHKTPSQSQSSSSTDPWAGLNAWK</sequence>
<dbReference type="EMBL" id="AAHF01000001">
    <property type="protein sequence ID" value="EAL93470.1"/>
    <property type="molecule type" value="Genomic_DNA"/>
</dbReference>
<dbReference type="RefSeq" id="XP_755508.1">
    <property type="nucleotide sequence ID" value="XM_750415.1"/>
</dbReference>
<dbReference type="SMR" id="Q4X0Z5"/>
<dbReference type="FunCoup" id="Q4X0Z5">
    <property type="interactions" value="79"/>
</dbReference>
<dbReference type="STRING" id="330879.Q4X0Z5"/>
<dbReference type="EnsemblFungi" id="EAL93470">
    <property type="protein sequence ID" value="EAL93470"/>
    <property type="gene ID" value="AFUA_2G11760"/>
</dbReference>
<dbReference type="GeneID" id="3513086"/>
<dbReference type="KEGG" id="afm:AFUA_2G11760"/>
<dbReference type="VEuPathDB" id="FungiDB:Afu2g11760"/>
<dbReference type="eggNOG" id="KOG2220">
    <property type="taxonomic scope" value="Eukaryota"/>
</dbReference>
<dbReference type="HOGENOM" id="CLU_003661_0_0_1"/>
<dbReference type="InParanoid" id="Q4X0Z5"/>
<dbReference type="OMA" id="CHAANQS"/>
<dbReference type="OrthoDB" id="2141925at2759"/>
<dbReference type="Proteomes" id="UP000002530">
    <property type="component" value="Chromosome 2"/>
</dbReference>
<dbReference type="GO" id="GO:0005768">
    <property type="term" value="C:endosome"/>
    <property type="evidence" value="ECO:0000318"/>
    <property type="project" value="GO_Central"/>
</dbReference>
<dbReference type="GO" id="GO:0043328">
    <property type="term" value="P:protein transport to vacuole involved in ubiquitin-dependent protein catabolic process via the multivesicular body sorting pathway"/>
    <property type="evidence" value="ECO:0000318"/>
    <property type="project" value="GO_Central"/>
</dbReference>
<dbReference type="CDD" id="cd09242">
    <property type="entry name" value="BRO1_ScBro1_like"/>
    <property type="match status" value="1"/>
</dbReference>
<dbReference type="CDD" id="cd09237">
    <property type="entry name" value="V_ScBro1_like"/>
    <property type="match status" value="1"/>
</dbReference>
<dbReference type="Gene3D" id="1.20.120.560">
    <property type="entry name" value="alix/aip1 in complex with the ypdl late domain"/>
    <property type="match status" value="1"/>
</dbReference>
<dbReference type="Gene3D" id="1.20.140.50">
    <property type="entry name" value="alix/aip1 like domains"/>
    <property type="match status" value="1"/>
</dbReference>
<dbReference type="Gene3D" id="1.25.40.280">
    <property type="entry name" value="alix/aip1 like domains"/>
    <property type="match status" value="1"/>
</dbReference>
<dbReference type="InterPro" id="IPR025304">
    <property type="entry name" value="ALIX_V_dom"/>
</dbReference>
<dbReference type="InterPro" id="IPR004328">
    <property type="entry name" value="BRO1_dom"/>
</dbReference>
<dbReference type="InterPro" id="IPR038499">
    <property type="entry name" value="BRO1_sf"/>
</dbReference>
<dbReference type="PANTHER" id="PTHR23030">
    <property type="entry name" value="PCD6 INTERACTING PROTEIN-RELATED"/>
    <property type="match status" value="1"/>
</dbReference>
<dbReference type="PANTHER" id="PTHR23030:SF30">
    <property type="entry name" value="TYROSINE-PROTEIN PHOSPHATASE NON-RECEPTOR TYPE 23"/>
    <property type="match status" value="1"/>
</dbReference>
<dbReference type="Pfam" id="PF13949">
    <property type="entry name" value="ALIX_LYPXL_bnd"/>
    <property type="match status" value="1"/>
</dbReference>
<dbReference type="Pfam" id="PF03097">
    <property type="entry name" value="BRO1"/>
    <property type="match status" value="1"/>
</dbReference>
<dbReference type="SMART" id="SM01041">
    <property type="entry name" value="BRO1"/>
    <property type="match status" value="1"/>
</dbReference>
<dbReference type="PROSITE" id="PS51180">
    <property type="entry name" value="BRO1"/>
    <property type="match status" value="1"/>
</dbReference>
<protein>
    <recommendedName>
        <fullName>Vacuolar protein-sorting protein bro1</fullName>
    </recommendedName>
    <alternativeName>
        <fullName>BRO domain-containing protein 1</fullName>
    </alternativeName>
</protein>
<evidence type="ECO:0000250" key="1"/>
<evidence type="ECO:0000255" key="2"/>
<evidence type="ECO:0000255" key="3">
    <source>
        <dbReference type="PROSITE-ProRule" id="PRU00526"/>
    </source>
</evidence>
<evidence type="ECO:0000256" key="4">
    <source>
        <dbReference type="SAM" id="MobiDB-lite"/>
    </source>
</evidence>
<evidence type="ECO:0000305" key="5"/>
<organism>
    <name type="scientific">Aspergillus fumigatus (strain ATCC MYA-4609 / CBS 101355 / FGSC A1100 / Af293)</name>
    <name type="common">Neosartorya fumigata</name>
    <dbReference type="NCBI Taxonomy" id="330879"/>
    <lineage>
        <taxon>Eukaryota</taxon>
        <taxon>Fungi</taxon>
        <taxon>Dikarya</taxon>
        <taxon>Ascomycota</taxon>
        <taxon>Pezizomycotina</taxon>
        <taxon>Eurotiomycetes</taxon>
        <taxon>Eurotiomycetidae</taxon>
        <taxon>Eurotiales</taxon>
        <taxon>Aspergillaceae</taxon>
        <taxon>Aspergillus</taxon>
        <taxon>Aspergillus subgen. Fumigati</taxon>
    </lineage>
</organism>
<reference key="1">
    <citation type="journal article" date="2005" name="Nature">
        <title>Genomic sequence of the pathogenic and allergenic filamentous fungus Aspergillus fumigatus.</title>
        <authorList>
            <person name="Nierman W.C."/>
            <person name="Pain A."/>
            <person name="Anderson M.J."/>
            <person name="Wortman J.R."/>
            <person name="Kim H.S."/>
            <person name="Arroyo J."/>
            <person name="Berriman M."/>
            <person name="Abe K."/>
            <person name="Archer D.B."/>
            <person name="Bermejo C."/>
            <person name="Bennett J.W."/>
            <person name="Bowyer P."/>
            <person name="Chen D."/>
            <person name="Collins M."/>
            <person name="Coulsen R."/>
            <person name="Davies R."/>
            <person name="Dyer P.S."/>
            <person name="Farman M.L."/>
            <person name="Fedorova N."/>
            <person name="Fedorova N.D."/>
            <person name="Feldblyum T.V."/>
            <person name="Fischer R."/>
            <person name="Fosker N."/>
            <person name="Fraser A."/>
            <person name="Garcia J.L."/>
            <person name="Garcia M.J."/>
            <person name="Goble A."/>
            <person name="Goldman G.H."/>
            <person name="Gomi K."/>
            <person name="Griffith-Jones S."/>
            <person name="Gwilliam R."/>
            <person name="Haas B.J."/>
            <person name="Haas H."/>
            <person name="Harris D.E."/>
            <person name="Horiuchi H."/>
            <person name="Huang J."/>
            <person name="Humphray S."/>
            <person name="Jimenez J."/>
            <person name="Keller N."/>
            <person name="Khouri H."/>
            <person name="Kitamoto K."/>
            <person name="Kobayashi T."/>
            <person name="Konzack S."/>
            <person name="Kulkarni R."/>
            <person name="Kumagai T."/>
            <person name="Lafton A."/>
            <person name="Latge J.-P."/>
            <person name="Li W."/>
            <person name="Lord A."/>
            <person name="Lu C."/>
            <person name="Majoros W.H."/>
            <person name="May G.S."/>
            <person name="Miller B.L."/>
            <person name="Mohamoud Y."/>
            <person name="Molina M."/>
            <person name="Monod M."/>
            <person name="Mouyna I."/>
            <person name="Mulligan S."/>
            <person name="Murphy L.D."/>
            <person name="O'Neil S."/>
            <person name="Paulsen I."/>
            <person name="Penalva M.A."/>
            <person name="Pertea M."/>
            <person name="Price C."/>
            <person name="Pritchard B.L."/>
            <person name="Quail M.A."/>
            <person name="Rabbinowitsch E."/>
            <person name="Rawlins N."/>
            <person name="Rajandream M.A."/>
            <person name="Reichard U."/>
            <person name="Renauld H."/>
            <person name="Robson G.D."/>
            <person name="Rodriguez de Cordoba S."/>
            <person name="Rodriguez-Pena J.M."/>
            <person name="Ronning C.M."/>
            <person name="Rutter S."/>
            <person name="Salzberg S.L."/>
            <person name="Sanchez M."/>
            <person name="Sanchez-Ferrero J.C."/>
            <person name="Saunders D."/>
            <person name="Seeger K."/>
            <person name="Squares R."/>
            <person name="Squares S."/>
            <person name="Takeuchi M."/>
            <person name="Tekaia F."/>
            <person name="Turner G."/>
            <person name="Vazquez de Aldana C.R."/>
            <person name="Weidman J."/>
            <person name="White O."/>
            <person name="Woodward J.R."/>
            <person name="Yu J.-H."/>
            <person name="Fraser C.M."/>
            <person name="Galagan J.E."/>
            <person name="Asai K."/>
            <person name="Machida M."/>
            <person name="Hall N."/>
            <person name="Barrell B.G."/>
            <person name="Denning D.W."/>
        </authorList>
    </citation>
    <scope>NUCLEOTIDE SEQUENCE [LARGE SCALE GENOMIC DNA]</scope>
    <source>
        <strain>ATCC MYA-4609 / CBS 101355 / FGSC A1100 / Af293</strain>
    </source>
</reference>
<feature type="chain" id="PRO_0000218860" description="Vacuolar protein-sorting protein bro1">
    <location>
        <begin position="1"/>
        <end position="976"/>
    </location>
</feature>
<feature type="domain" description="BRO1" evidence="3">
    <location>
        <begin position="5"/>
        <end position="387"/>
    </location>
</feature>
<feature type="region of interest" description="Disordered" evidence="4">
    <location>
        <begin position="743"/>
        <end position="762"/>
    </location>
</feature>
<feature type="region of interest" description="Disordered" evidence="4">
    <location>
        <begin position="769"/>
        <end position="976"/>
    </location>
</feature>
<feature type="coiled-coil region" evidence="2">
    <location>
        <begin position="748"/>
        <end position="775"/>
    </location>
</feature>
<feature type="compositionally biased region" description="Basic and acidic residues" evidence="4">
    <location>
        <begin position="746"/>
        <end position="762"/>
    </location>
</feature>
<feature type="compositionally biased region" description="Low complexity" evidence="4">
    <location>
        <begin position="775"/>
        <end position="792"/>
    </location>
</feature>
<feature type="compositionally biased region" description="Low complexity" evidence="4">
    <location>
        <begin position="851"/>
        <end position="862"/>
    </location>
</feature>
<feature type="compositionally biased region" description="Low complexity" evidence="4">
    <location>
        <begin position="884"/>
        <end position="895"/>
    </location>
</feature>
<feature type="compositionally biased region" description="Pro residues" evidence="4">
    <location>
        <begin position="914"/>
        <end position="937"/>
    </location>
</feature>
<name>BRO1_ASPFU</name>
<proteinExistence type="inferred from homology"/>
<keyword id="KW-0175">Coiled coil</keyword>
<keyword id="KW-0963">Cytoplasm</keyword>
<keyword id="KW-0967">Endosome</keyword>
<keyword id="KW-0653">Protein transport</keyword>
<keyword id="KW-1185">Reference proteome</keyword>
<keyword id="KW-0813">Transport</keyword>
<gene>
    <name type="primary">bro1</name>
    <name type="ORF">AFUA_2G11760</name>
</gene>
<comment type="function">
    <text evidence="1">Involved in concentration and sorting of cargo proteins of the multivesicular body (MVB) for incorporation into intralumenal vesicles.</text>
</comment>
<comment type="subcellular location">
    <subcellularLocation>
        <location evidence="1">Cytoplasm</location>
    </subcellularLocation>
    <subcellularLocation>
        <location evidence="1">Endosome</location>
    </subcellularLocation>
</comment>
<comment type="similarity">
    <text evidence="5">Belongs to the BRO1 family.</text>
</comment>
<accession>Q4X0Z5</accession>